<sequence>MKGSYKSRWVIVIVVVIAAIAAFWFWQGRNDSQSAAPGATKQAQQSPAGGRRGMRSGPLAPVQAATAVEQAVPRYLTGLGTITAANTVTVRSRVDGQLMALHFQEGQQVKAGDLLAEIDPSQFKVALAQAQGQLAKDKATLANARRDLARYQQLAKTNLVSRQELDAQQALVSETEGTIKADEASVASAQLQLDWSRITAPVDGRVGLKQVDVGNQISSGDTTGIVVITQTHPIDLVFTLPESDIATVVQAQKAGKPLVVEAWDRTNSKKLSEGTLLSLDNQIDATTGTIKVKARFNNQDDALFPNQFVNARMLVDTEQNAVVIPTAALQMGNEGHFVWVLNSENKVSKHLVTPGIQDSQKVVIRAGISAGDRVVTDGIDRLTEGAKVEVVEAQSTTTSEEKATSREYAKKGARS</sequence>
<name>MDTA_ECO24</name>
<accession>A7ZNP7</accession>
<proteinExistence type="inferred from homology"/>
<dbReference type="EMBL" id="CP000800">
    <property type="protein sequence ID" value="ABV21129.1"/>
    <property type="molecule type" value="Genomic_DNA"/>
</dbReference>
<dbReference type="RefSeq" id="WP_000678963.1">
    <property type="nucleotide sequence ID" value="NC_009801.1"/>
</dbReference>
<dbReference type="SMR" id="A7ZNP7"/>
<dbReference type="KEGG" id="ecw:EcE24377A_2366"/>
<dbReference type="HOGENOM" id="CLU_018816_2_0_6"/>
<dbReference type="Proteomes" id="UP000001122">
    <property type="component" value="Chromosome"/>
</dbReference>
<dbReference type="GO" id="GO:1990281">
    <property type="term" value="C:efflux pump complex"/>
    <property type="evidence" value="ECO:0007669"/>
    <property type="project" value="TreeGrafter"/>
</dbReference>
<dbReference type="GO" id="GO:0005886">
    <property type="term" value="C:plasma membrane"/>
    <property type="evidence" value="ECO:0007669"/>
    <property type="project" value="UniProtKB-SubCell"/>
</dbReference>
<dbReference type="GO" id="GO:0015562">
    <property type="term" value="F:efflux transmembrane transporter activity"/>
    <property type="evidence" value="ECO:0007669"/>
    <property type="project" value="TreeGrafter"/>
</dbReference>
<dbReference type="FunFam" id="2.40.420.20:FF:000001">
    <property type="entry name" value="Efflux RND transporter periplasmic adaptor subunit"/>
    <property type="match status" value="1"/>
</dbReference>
<dbReference type="FunFam" id="1.10.287.470:FF:000005">
    <property type="entry name" value="Multidrug resistance protein MdtA"/>
    <property type="match status" value="1"/>
</dbReference>
<dbReference type="FunFam" id="2.40.30.170:FF:000006">
    <property type="entry name" value="Multidrug resistance protein MdtA"/>
    <property type="match status" value="1"/>
</dbReference>
<dbReference type="Gene3D" id="2.40.30.170">
    <property type="match status" value="1"/>
</dbReference>
<dbReference type="Gene3D" id="2.40.420.20">
    <property type="match status" value="1"/>
</dbReference>
<dbReference type="Gene3D" id="2.40.50.100">
    <property type="match status" value="1"/>
</dbReference>
<dbReference type="Gene3D" id="1.10.287.470">
    <property type="entry name" value="Helix hairpin bin"/>
    <property type="match status" value="1"/>
</dbReference>
<dbReference type="HAMAP" id="MF_01422">
    <property type="entry name" value="MdtA"/>
    <property type="match status" value="1"/>
</dbReference>
<dbReference type="InterPro" id="IPR032317">
    <property type="entry name" value="CusB_D23"/>
</dbReference>
<dbReference type="InterPro" id="IPR022824">
    <property type="entry name" value="Multidrug-R_MdtA"/>
</dbReference>
<dbReference type="InterPro" id="IPR006143">
    <property type="entry name" value="RND_pump_MFP"/>
</dbReference>
<dbReference type="NCBIfam" id="NF008589">
    <property type="entry name" value="PRK11556.1"/>
    <property type="match status" value="1"/>
</dbReference>
<dbReference type="NCBIfam" id="TIGR01730">
    <property type="entry name" value="RND_mfp"/>
    <property type="match status" value="1"/>
</dbReference>
<dbReference type="PANTHER" id="PTHR30469">
    <property type="entry name" value="MULTIDRUG RESISTANCE PROTEIN MDTA"/>
    <property type="match status" value="1"/>
</dbReference>
<dbReference type="PANTHER" id="PTHR30469:SF12">
    <property type="entry name" value="MULTIDRUG RESISTANCE PROTEIN MDTA"/>
    <property type="match status" value="1"/>
</dbReference>
<dbReference type="Pfam" id="PF16576">
    <property type="entry name" value="HlyD_D23"/>
    <property type="match status" value="1"/>
</dbReference>
<dbReference type="SUPFAM" id="SSF111369">
    <property type="entry name" value="HlyD-like secretion proteins"/>
    <property type="match status" value="1"/>
</dbReference>
<protein>
    <recommendedName>
        <fullName evidence="1">Multidrug resistance protein MdtA</fullName>
    </recommendedName>
    <alternativeName>
        <fullName evidence="1">Multidrug transporter MdtA</fullName>
    </alternativeName>
</protein>
<comment type="function">
    <text evidence="1">The MdtABC tripartite complex confers resistance against novobiocin and deoxycholate.</text>
</comment>
<comment type="subunit">
    <text evidence="1">Part of a tripartite efflux system composed of MdtA, MdtB and MdtC.</text>
</comment>
<comment type="subcellular location">
    <subcellularLocation>
        <location evidence="1">Cell inner membrane</location>
        <topology evidence="1">Peripheral membrane protein</topology>
    </subcellularLocation>
</comment>
<comment type="induction">
    <text evidence="1">The mdtABC operon is transcriptionally activated by BaeR.</text>
</comment>
<comment type="similarity">
    <text evidence="1">Belongs to the membrane fusion protein (MFP) (TC 8.A.1) family.</text>
</comment>
<reference key="1">
    <citation type="journal article" date="2008" name="J. Bacteriol.">
        <title>The pangenome structure of Escherichia coli: comparative genomic analysis of E. coli commensal and pathogenic isolates.</title>
        <authorList>
            <person name="Rasko D.A."/>
            <person name="Rosovitz M.J."/>
            <person name="Myers G.S.A."/>
            <person name="Mongodin E.F."/>
            <person name="Fricke W.F."/>
            <person name="Gajer P."/>
            <person name="Crabtree J."/>
            <person name="Sebaihia M."/>
            <person name="Thomson N.R."/>
            <person name="Chaudhuri R."/>
            <person name="Henderson I.R."/>
            <person name="Sperandio V."/>
            <person name="Ravel J."/>
        </authorList>
    </citation>
    <scope>NUCLEOTIDE SEQUENCE [LARGE SCALE GENOMIC DNA]</scope>
    <source>
        <strain>E24377A / ETEC</strain>
    </source>
</reference>
<feature type="signal peptide" evidence="1">
    <location>
        <begin position="1"/>
        <end position="21"/>
    </location>
</feature>
<feature type="chain" id="PRO_1000068498" description="Multidrug resistance protein MdtA">
    <location>
        <begin position="22"/>
        <end position="415"/>
    </location>
</feature>
<feature type="region of interest" description="Disordered" evidence="2">
    <location>
        <begin position="31"/>
        <end position="60"/>
    </location>
</feature>
<feature type="region of interest" description="Disordered" evidence="2">
    <location>
        <begin position="392"/>
        <end position="415"/>
    </location>
</feature>
<feature type="compositionally biased region" description="Polar residues" evidence="2">
    <location>
        <begin position="31"/>
        <end position="47"/>
    </location>
</feature>
<feature type="compositionally biased region" description="Basic and acidic residues" evidence="2">
    <location>
        <begin position="399"/>
        <end position="415"/>
    </location>
</feature>
<organism>
    <name type="scientific">Escherichia coli O139:H28 (strain E24377A / ETEC)</name>
    <dbReference type="NCBI Taxonomy" id="331111"/>
    <lineage>
        <taxon>Bacteria</taxon>
        <taxon>Pseudomonadati</taxon>
        <taxon>Pseudomonadota</taxon>
        <taxon>Gammaproteobacteria</taxon>
        <taxon>Enterobacterales</taxon>
        <taxon>Enterobacteriaceae</taxon>
        <taxon>Escherichia</taxon>
    </lineage>
</organism>
<keyword id="KW-0997">Cell inner membrane</keyword>
<keyword id="KW-1003">Cell membrane</keyword>
<keyword id="KW-0472">Membrane</keyword>
<keyword id="KW-1185">Reference proteome</keyword>
<keyword id="KW-0732">Signal</keyword>
<keyword id="KW-0813">Transport</keyword>
<evidence type="ECO:0000255" key="1">
    <source>
        <dbReference type="HAMAP-Rule" id="MF_01422"/>
    </source>
</evidence>
<evidence type="ECO:0000256" key="2">
    <source>
        <dbReference type="SAM" id="MobiDB-lite"/>
    </source>
</evidence>
<gene>
    <name evidence="1" type="primary">mdtA</name>
    <name type="ordered locus">EcE24377A_2366</name>
</gene>